<gene>
    <name evidence="1" type="primary">nrdR</name>
    <name type="ordered locus">Bpet0615</name>
</gene>
<feature type="chain" id="PRO_1000124471" description="Transcriptional repressor NrdR">
    <location>
        <begin position="1"/>
        <end position="158"/>
    </location>
</feature>
<feature type="domain" description="ATP-cone" evidence="1">
    <location>
        <begin position="49"/>
        <end position="139"/>
    </location>
</feature>
<feature type="zinc finger region" evidence="1">
    <location>
        <begin position="3"/>
        <end position="34"/>
    </location>
</feature>
<reference key="1">
    <citation type="journal article" date="2008" name="BMC Genomics">
        <title>The missing link: Bordetella petrii is endowed with both the metabolic versatility of environmental bacteria and virulence traits of pathogenic Bordetellae.</title>
        <authorList>
            <person name="Gross R."/>
            <person name="Guzman C.A."/>
            <person name="Sebaihia M."/>
            <person name="Martin dos Santos V.A.P."/>
            <person name="Pieper D.H."/>
            <person name="Koebnik R."/>
            <person name="Lechner M."/>
            <person name="Bartels D."/>
            <person name="Buhrmester J."/>
            <person name="Choudhuri J.V."/>
            <person name="Ebensen T."/>
            <person name="Gaigalat L."/>
            <person name="Herrmann S."/>
            <person name="Khachane A.N."/>
            <person name="Larisch C."/>
            <person name="Link S."/>
            <person name="Linke B."/>
            <person name="Meyer F."/>
            <person name="Mormann S."/>
            <person name="Nakunst D."/>
            <person name="Rueckert C."/>
            <person name="Schneiker-Bekel S."/>
            <person name="Schulze K."/>
            <person name="Voerholter F.-J."/>
            <person name="Yevsa T."/>
            <person name="Engle J.T."/>
            <person name="Goldman W.E."/>
            <person name="Puehler A."/>
            <person name="Goebel U.B."/>
            <person name="Goesmann A."/>
            <person name="Bloecker H."/>
            <person name="Kaiser O."/>
            <person name="Martinez-Arias R."/>
        </authorList>
    </citation>
    <scope>NUCLEOTIDE SEQUENCE [LARGE SCALE GENOMIC DNA]</scope>
    <source>
        <strain>ATCC BAA-461 / DSM 12804 / CCUG 43448</strain>
    </source>
</reference>
<proteinExistence type="inferred from homology"/>
<comment type="function">
    <text evidence="1">Negatively regulates transcription of bacterial ribonucleotide reductase nrd genes and operons by binding to NrdR-boxes.</text>
</comment>
<comment type="cofactor">
    <cofactor evidence="1">
        <name>Zn(2+)</name>
        <dbReference type="ChEBI" id="CHEBI:29105"/>
    </cofactor>
    <text evidence="1">Binds 1 zinc ion.</text>
</comment>
<comment type="similarity">
    <text evidence="1">Belongs to the NrdR family.</text>
</comment>
<organism>
    <name type="scientific">Bordetella petrii (strain ATCC BAA-461 / DSM 12804 / CCUG 43448)</name>
    <dbReference type="NCBI Taxonomy" id="340100"/>
    <lineage>
        <taxon>Bacteria</taxon>
        <taxon>Pseudomonadati</taxon>
        <taxon>Pseudomonadota</taxon>
        <taxon>Betaproteobacteria</taxon>
        <taxon>Burkholderiales</taxon>
        <taxon>Alcaligenaceae</taxon>
        <taxon>Bordetella</taxon>
    </lineage>
</organism>
<name>NRDR_BORPD</name>
<accession>A9I295</accession>
<keyword id="KW-0067">ATP-binding</keyword>
<keyword id="KW-0238">DNA-binding</keyword>
<keyword id="KW-0479">Metal-binding</keyword>
<keyword id="KW-0547">Nucleotide-binding</keyword>
<keyword id="KW-0678">Repressor</keyword>
<keyword id="KW-0804">Transcription</keyword>
<keyword id="KW-0805">Transcription regulation</keyword>
<keyword id="KW-0862">Zinc</keyword>
<keyword id="KW-0863">Zinc-finger</keyword>
<evidence type="ECO:0000255" key="1">
    <source>
        <dbReference type="HAMAP-Rule" id="MF_00440"/>
    </source>
</evidence>
<dbReference type="EMBL" id="AM902716">
    <property type="protein sequence ID" value="CAP40947.1"/>
    <property type="molecule type" value="Genomic_DNA"/>
</dbReference>
<dbReference type="SMR" id="A9I295"/>
<dbReference type="STRING" id="94624.Bpet0615"/>
<dbReference type="KEGG" id="bpt:Bpet0615"/>
<dbReference type="eggNOG" id="COG1327">
    <property type="taxonomic scope" value="Bacteria"/>
</dbReference>
<dbReference type="Proteomes" id="UP000001225">
    <property type="component" value="Chromosome"/>
</dbReference>
<dbReference type="GO" id="GO:0005524">
    <property type="term" value="F:ATP binding"/>
    <property type="evidence" value="ECO:0007669"/>
    <property type="project" value="UniProtKB-KW"/>
</dbReference>
<dbReference type="GO" id="GO:0003677">
    <property type="term" value="F:DNA binding"/>
    <property type="evidence" value="ECO:0007669"/>
    <property type="project" value="UniProtKB-KW"/>
</dbReference>
<dbReference type="GO" id="GO:0008270">
    <property type="term" value="F:zinc ion binding"/>
    <property type="evidence" value="ECO:0007669"/>
    <property type="project" value="UniProtKB-UniRule"/>
</dbReference>
<dbReference type="GO" id="GO:0045892">
    <property type="term" value="P:negative regulation of DNA-templated transcription"/>
    <property type="evidence" value="ECO:0007669"/>
    <property type="project" value="UniProtKB-UniRule"/>
</dbReference>
<dbReference type="HAMAP" id="MF_00440">
    <property type="entry name" value="NrdR"/>
    <property type="match status" value="1"/>
</dbReference>
<dbReference type="InterPro" id="IPR005144">
    <property type="entry name" value="ATP-cone_dom"/>
</dbReference>
<dbReference type="InterPro" id="IPR055173">
    <property type="entry name" value="NrdR-like_N"/>
</dbReference>
<dbReference type="InterPro" id="IPR003796">
    <property type="entry name" value="RNR_NrdR-like"/>
</dbReference>
<dbReference type="NCBIfam" id="TIGR00244">
    <property type="entry name" value="transcriptional regulator NrdR"/>
    <property type="match status" value="1"/>
</dbReference>
<dbReference type="PANTHER" id="PTHR30455">
    <property type="entry name" value="TRANSCRIPTIONAL REPRESSOR NRDR"/>
    <property type="match status" value="1"/>
</dbReference>
<dbReference type="PANTHER" id="PTHR30455:SF2">
    <property type="entry name" value="TRANSCRIPTIONAL REPRESSOR NRDR"/>
    <property type="match status" value="1"/>
</dbReference>
<dbReference type="Pfam" id="PF03477">
    <property type="entry name" value="ATP-cone"/>
    <property type="match status" value="1"/>
</dbReference>
<dbReference type="Pfam" id="PF22811">
    <property type="entry name" value="Zn_ribbon_NrdR"/>
    <property type="match status" value="1"/>
</dbReference>
<dbReference type="PROSITE" id="PS51161">
    <property type="entry name" value="ATP_CONE"/>
    <property type="match status" value="1"/>
</dbReference>
<protein>
    <recommendedName>
        <fullName evidence="1">Transcriptional repressor NrdR</fullName>
    </recommendedName>
</protein>
<sequence length="158" mass="17940">MKCPFCGNADTQVVDSRVSEEGDTIRRRRRCLSCDKRFTTYERIELAMPSVVKRNGSRSDYDTAKLRASLSLALRKRPVSTDQVDSVVARIEETLLASGQREVSTERIGELVMAELKKLDKVGYVRFASVYKNFEDIGEFVDAIREMQGPMLPGKLRK</sequence>